<organism>
    <name type="scientific">Francisella philomiragia subsp. philomiragia (strain ATCC 25017 / CCUG 19701 / FSC 153 / O#319-036)</name>
    <dbReference type="NCBI Taxonomy" id="484022"/>
    <lineage>
        <taxon>Bacteria</taxon>
        <taxon>Pseudomonadati</taxon>
        <taxon>Pseudomonadota</taxon>
        <taxon>Gammaproteobacteria</taxon>
        <taxon>Thiotrichales</taxon>
        <taxon>Francisellaceae</taxon>
        <taxon>Francisella</taxon>
    </lineage>
</organism>
<proteinExistence type="inferred from homology"/>
<evidence type="ECO:0000255" key="1">
    <source>
        <dbReference type="HAMAP-Rule" id="MF_01337"/>
    </source>
</evidence>
<evidence type="ECO:0000305" key="2"/>
<sequence length="117" mass="12922">MDKKTARLSRSKRTRIKLKELGHTRLCVYRTPRHVYAQVISGDGSTVLAAASTVEKDVKAKCKYTGNVNSAAIVGEVIANRCKEKGISQVAFDRSGYKYHGRVKALAEAAREHGLQF</sequence>
<feature type="chain" id="PRO_1000086665" description="Large ribosomal subunit protein uL18">
    <location>
        <begin position="1"/>
        <end position="117"/>
    </location>
</feature>
<protein>
    <recommendedName>
        <fullName evidence="1">Large ribosomal subunit protein uL18</fullName>
    </recommendedName>
    <alternativeName>
        <fullName evidence="2">50S ribosomal protein L18</fullName>
    </alternativeName>
</protein>
<name>RL18_FRAP2</name>
<reference key="1">
    <citation type="submission" date="2007-12" db="EMBL/GenBank/DDBJ databases">
        <title>Complete sequence of chromosome of Francisella philomiragia subsp. philomiragia ATCC 25017.</title>
        <authorList>
            <consortium name="US DOE Joint Genome Institute"/>
            <person name="Copeland A."/>
            <person name="Lucas S."/>
            <person name="Lapidus A."/>
            <person name="Barry K."/>
            <person name="Detter J.C."/>
            <person name="Glavina del Rio T."/>
            <person name="Hammon N."/>
            <person name="Israni S."/>
            <person name="Dalin E."/>
            <person name="Tice H."/>
            <person name="Pitluck S."/>
            <person name="Chain P."/>
            <person name="Malfatti S."/>
            <person name="Shin M."/>
            <person name="Vergez L."/>
            <person name="Schmutz J."/>
            <person name="Larimer F."/>
            <person name="Land M."/>
            <person name="Hauser L."/>
            <person name="Richardson P."/>
        </authorList>
    </citation>
    <scope>NUCLEOTIDE SEQUENCE [LARGE SCALE GENOMIC DNA]</scope>
    <source>
        <strain>ATCC 25017 / CCUG 19701 / FSC 153 / O#319-036</strain>
    </source>
</reference>
<comment type="function">
    <text evidence="1">This is one of the proteins that bind and probably mediate the attachment of the 5S RNA into the large ribosomal subunit, where it forms part of the central protuberance.</text>
</comment>
<comment type="subunit">
    <text evidence="1">Part of the 50S ribosomal subunit; part of the 5S rRNA/L5/L18/L25 subcomplex. Contacts the 5S and 23S rRNAs.</text>
</comment>
<comment type="similarity">
    <text evidence="1">Belongs to the universal ribosomal protein uL18 family.</text>
</comment>
<gene>
    <name evidence="1" type="primary">rplR</name>
    <name type="ordered locus">Fphi_0571</name>
</gene>
<dbReference type="EMBL" id="CP000937">
    <property type="protein sequence ID" value="ABZ86789.1"/>
    <property type="molecule type" value="Genomic_DNA"/>
</dbReference>
<dbReference type="SMR" id="B0U0X3"/>
<dbReference type="KEGG" id="fph:Fphi_0571"/>
<dbReference type="eggNOG" id="COG0256">
    <property type="taxonomic scope" value="Bacteria"/>
</dbReference>
<dbReference type="HOGENOM" id="CLU_098841_0_1_6"/>
<dbReference type="GO" id="GO:0022625">
    <property type="term" value="C:cytosolic large ribosomal subunit"/>
    <property type="evidence" value="ECO:0007669"/>
    <property type="project" value="TreeGrafter"/>
</dbReference>
<dbReference type="GO" id="GO:0008097">
    <property type="term" value="F:5S rRNA binding"/>
    <property type="evidence" value="ECO:0007669"/>
    <property type="project" value="TreeGrafter"/>
</dbReference>
<dbReference type="GO" id="GO:0003735">
    <property type="term" value="F:structural constituent of ribosome"/>
    <property type="evidence" value="ECO:0007669"/>
    <property type="project" value="InterPro"/>
</dbReference>
<dbReference type="GO" id="GO:0006412">
    <property type="term" value="P:translation"/>
    <property type="evidence" value="ECO:0007669"/>
    <property type="project" value="UniProtKB-UniRule"/>
</dbReference>
<dbReference type="CDD" id="cd00432">
    <property type="entry name" value="Ribosomal_L18_L5e"/>
    <property type="match status" value="1"/>
</dbReference>
<dbReference type="FunFam" id="3.30.420.100:FF:000001">
    <property type="entry name" value="50S ribosomal protein L18"/>
    <property type="match status" value="1"/>
</dbReference>
<dbReference type="Gene3D" id="3.30.420.100">
    <property type="match status" value="1"/>
</dbReference>
<dbReference type="HAMAP" id="MF_01337_B">
    <property type="entry name" value="Ribosomal_uL18_B"/>
    <property type="match status" value="1"/>
</dbReference>
<dbReference type="InterPro" id="IPR004389">
    <property type="entry name" value="Ribosomal_uL18_bac-type"/>
</dbReference>
<dbReference type="InterPro" id="IPR005484">
    <property type="entry name" value="Ribosomal_uL18_bac/euk"/>
</dbReference>
<dbReference type="NCBIfam" id="TIGR00060">
    <property type="entry name" value="L18_bact"/>
    <property type="match status" value="1"/>
</dbReference>
<dbReference type="PANTHER" id="PTHR12899">
    <property type="entry name" value="39S RIBOSOMAL PROTEIN L18, MITOCHONDRIAL"/>
    <property type="match status" value="1"/>
</dbReference>
<dbReference type="PANTHER" id="PTHR12899:SF3">
    <property type="entry name" value="LARGE RIBOSOMAL SUBUNIT PROTEIN UL18M"/>
    <property type="match status" value="1"/>
</dbReference>
<dbReference type="Pfam" id="PF00861">
    <property type="entry name" value="Ribosomal_L18p"/>
    <property type="match status" value="1"/>
</dbReference>
<dbReference type="SUPFAM" id="SSF53137">
    <property type="entry name" value="Translational machinery components"/>
    <property type="match status" value="1"/>
</dbReference>
<keyword id="KW-0687">Ribonucleoprotein</keyword>
<keyword id="KW-0689">Ribosomal protein</keyword>
<keyword id="KW-0694">RNA-binding</keyword>
<keyword id="KW-0699">rRNA-binding</keyword>
<accession>B0U0X3</accession>